<sequence>MIASKFGIGQQVRHSLLGYLGVVVDIDPVYSLSEPSPDELAVNDELRAAPWYHVVMEDDNGLPVHTYLAEAQLSSELQDEHPEQPSMDELAQTIRKQLQAPRLRN</sequence>
<proteinExistence type="inferred from homology"/>
<protein>
    <recommendedName>
        <fullName evidence="1">Heat shock protein HspQ</fullName>
    </recommendedName>
</protein>
<dbReference type="EMBL" id="CP000970">
    <property type="protein sequence ID" value="ACB15685.1"/>
    <property type="molecule type" value="Genomic_DNA"/>
</dbReference>
<dbReference type="RefSeq" id="WP_001295356.1">
    <property type="nucleotide sequence ID" value="NC_010498.1"/>
</dbReference>
<dbReference type="SMR" id="B1LJ31"/>
<dbReference type="GeneID" id="93776448"/>
<dbReference type="KEGG" id="ecm:EcSMS35_2152"/>
<dbReference type="HOGENOM" id="CLU_123865_1_0_6"/>
<dbReference type="Proteomes" id="UP000007011">
    <property type="component" value="Chromosome"/>
</dbReference>
<dbReference type="GO" id="GO:0005737">
    <property type="term" value="C:cytoplasm"/>
    <property type="evidence" value="ECO:0007669"/>
    <property type="project" value="UniProtKB-SubCell"/>
</dbReference>
<dbReference type="GO" id="GO:0003677">
    <property type="term" value="F:DNA binding"/>
    <property type="evidence" value="ECO:0007669"/>
    <property type="project" value="InterPro"/>
</dbReference>
<dbReference type="GO" id="GO:0009408">
    <property type="term" value="P:response to heat"/>
    <property type="evidence" value="ECO:0007669"/>
    <property type="project" value="UniProtKB-UniRule"/>
</dbReference>
<dbReference type="Gene3D" id="2.30.30.390">
    <property type="entry name" value="Hemimethylated DNA-binding domain"/>
    <property type="match status" value="1"/>
</dbReference>
<dbReference type="HAMAP" id="MF_01194">
    <property type="entry name" value="HspQ"/>
    <property type="match status" value="1"/>
</dbReference>
<dbReference type="InterPro" id="IPR011722">
    <property type="entry name" value="Hemimethylated_DNA-bd_dom"/>
</dbReference>
<dbReference type="InterPro" id="IPR036623">
    <property type="entry name" value="Hemimethylated_DNA-bd_sf"/>
</dbReference>
<dbReference type="InterPro" id="IPR022866">
    <property type="entry name" value="HspQ"/>
</dbReference>
<dbReference type="NCBIfam" id="NF010729">
    <property type="entry name" value="PRK14129.1"/>
    <property type="match status" value="1"/>
</dbReference>
<dbReference type="NCBIfam" id="TIGR02097">
    <property type="entry name" value="yccV"/>
    <property type="match status" value="1"/>
</dbReference>
<dbReference type="Pfam" id="PF08755">
    <property type="entry name" value="YccV-like"/>
    <property type="match status" value="1"/>
</dbReference>
<dbReference type="SMART" id="SM00992">
    <property type="entry name" value="YccV-like"/>
    <property type="match status" value="1"/>
</dbReference>
<dbReference type="SUPFAM" id="SSF141255">
    <property type="entry name" value="YccV-like"/>
    <property type="match status" value="1"/>
</dbReference>
<comment type="function">
    <text evidence="1">Involved in the degradation of certain denaturated proteins, including DnaA, during heat shock stress.</text>
</comment>
<comment type="subcellular location">
    <subcellularLocation>
        <location evidence="1">Cytoplasm</location>
    </subcellularLocation>
</comment>
<comment type="similarity">
    <text evidence="1">Belongs to the HspQ family.</text>
</comment>
<organism>
    <name type="scientific">Escherichia coli (strain SMS-3-5 / SECEC)</name>
    <dbReference type="NCBI Taxonomy" id="439855"/>
    <lineage>
        <taxon>Bacteria</taxon>
        <taxon>Pseudomonadati</taxon>
        <taxon>Pseudomonadota</taxon>
        <taxon>Gammaproteobacteria</taxon>
        <taxon>Enterobacterales</taxon>
        <taxon>Enterobacteriaceae</taxon>
        <taxon>Escherichia</taxon>
    </lineage>
</organism>
<accession>B1LJ31</accession>
<gene>
    <name evidence="1" type="primary">hspQ</name>
    <name type="ordered locus">EcSMS35_2152</name>
</gene>
<evidence type="ECO:0000255" key="1">
    <source>
        <dbReference type="HAMAP-Rule" id="MF_01194"/>
    </source>
</evidence>
<evidence type="ECO:0000256" key="2">
    <source>
        <dbReference type="SAM" id="MobiDB-lite"/>
    </source>
</evidence>
<reference key="1">
    <citation type="journal article" date="2008" name="J. Bacteriol.">
        <title>Insights into the environmental resistance gene pool from the genome sequence of the multidrug-resistant environmental isolate Escherichia coli SMS-3-5.</title>
        <authorList>
            <person name="Fricke W.F."/>
            <person name="Wright M.S."/>
            <person name="Lindell A.H."/>
            <person name="Harkins D.M."/>
            <person name="Baker-Austin C."/>
            <person name="Ravel J."/>
            <person name="Stepanauskas R."/>
        </authorList>
    </citation>
    <scope>NUCLEOTIDE SEQUENCE [LARGE SCALE GENOMIC DNA]</scope>
    <source>
        <strain>SMS-3-5 / SECEC</strain>
    </source>
</reference>
<keyword id="KW-0963">Cytoplasm</keyword>
<keyword id="KW-0346">Stress response</keyword>
<feature type="chain" id="PRO_1000138410" description="Heat shock protein HspQ">
    <location>
        <begin position="1"/>
        <end position="105"/>
    </location>
</feature>
<feature type="region of interest" description="Disordered" evidence="2">
    <location>
        <begin position="75"/>
        <end position="105"/>
    </location>
</feature>
<name>HSPQ_ECOSM</name>